<accession>Q5XI94</accession>
<name>FIRRM_RAT</name>
<sequence length="905" mass="101794">MSQNGAVATNGVMLEELSSWPEEICRRELPSVLPRLLSMYQCSESWIEHIRILKIIVEMFLPHMNHLTLEETLFSQILPKTIQLFDGMICELTSEARELSSQNLEIQITIRNILQTMVQIIGSLTGCVHHVCATQESIILGNIHSLPSFILHIIKSTFVHCKNSESVYSGRLHLVSDLLQTLFKEAYSLQKQLMELLDMVCLGPSEDENSILTMVEVIHSLMDICSVISSMDKAFHANTWKFIIKQSLKHQSVIRSQLKHKEIISSLCEDILFSFHSCLQLAEQTTEPAAQDNADYRLFQKTLKLCRFFANSLLHYTKEFLPFLPDSCRTLHQLYLQIYSKFPPCLYTAKISKVQQEEIAGTFLVVLDPLLSQLLKSQSFVQTVLASKLDLPHELQLPQVLLLVVVVDKLPSQPEDVQTLWCTEDMTRMSILKAIFYNFGQFSGELSLPAHLQGVKGKGQAEVPVTLYQRICVHLCTFVASLHPTLFPELDAALLNAVLSTNMSTSLLAMDVWCFLARYGTAELGAHHVTLVAHLIKSCPGRCVQLTNLSVLLRRLFFFMAPAHQVEFIQKFSPREADNLHLWQYISFQALPADLRKQVTCEVTGVCTAQCRKWLSGSHTLAELDSLNTALSVLLTVCNSAGEALDSRQLTAVTEVVGQLWAFINVEQIISQPHVQQAFSLLLQLLAFFIQTVDLQLISQVVNVLTLVIKLEPPDHVSLAVLDFLSSLGKLYISQTLRDKVLPSLSCIVASLMVNRNWLLEQHTLEAFTQFAEGTKHEEIVSQCLGSEEIKNKVVSFLEKTESVGETEAATADNSGEQKTDTFWEPVAKVTLEEAKGSAFQPCTKRARQELLLEEEYRSAFQTATRALETTEALLKHSRAPAWLLSELGALQERIEKLKCCVLRG</sequence>
<feature type="chain" id="PRO_0000279463" description="FIGNL1-interacting regulator of recombination and mitosis">
    <location>
        <begin position="1"/>
        <end position="905"/>
    </location>
</feature>
<feature type="modified residue" description="Phosphoserine" evidence="1">
    <location>
        <position position="101"/>
    </location>
</feature>
<feature type="modified residue" description="Phosphoserine" evidence="1">
    <location>
        <position position="796"/>
    </location>
</feature>
<feature type="modified residue" description="N6-acetyllysine" evidence="1">
    <location>
        <position position="845"/>
    </location>
</feature>
<protein>
    <recommendedName>
        <fullName>FIGNL1-interacting regulator of recombination and mitosis</fullName>
    </recommendedName>
    <alternativeName>
        <fullName>FIDGETIN-like-1 interacting protein</fullName>
        <shortName>FLIP</shortName>
    </alternativeName>
    <alternativeName>
        <fullName>POLO1-associating protein</fullName>
    </alternativeName>
</protein>
<reference key="1">
    <citation type="journal article" date="2004" name="Genome Res.">
        <title>The status, quality, and expansion of the NIH full-length cDNA project: the Mammalian Gene Collection (MGC).</title>
        <authorList>
            <consortium name="The MGC Project Team"/>
        </authorList>
    </citation>
    <scope>NUCLEOTIDE SEQUENCE [LARGE SCALE MRNA]</scope>
    <source>
        <tissue>Kidney</tissue>
    </source>
</reference>
<dbReference type="EMBL" id="BC083793">
    <property type="protein sequence ID" value="AAH83793.1"/>
    <property type="molecule type" value="mRNA"/>
</dbReference>
<dbReference type="RefSeq" id="NP_001017493.1">
    <property type="nucleotide sequence ID" value="NM_001017493.1"/>
</dbReference>
<dbReference type="FunCoup" id="Q5XI94">
    <property type="interactions" value="2534"/>
</dbReference>
<dbReference type="STRING" id="10116.ENSRNOP00000068703"/>
<dbReference type="PhosphoSitePlus" id="Q5XI94"/>
<dbReference type="PaxDb" id="10116-ENSRNOP00000055748"/>
<dbReference type="Ensembl" id="ENSRNOT00000087487.2">
    <property type="protein sequence ID" value="ENSRNOP00000068703.1"/>
    <property type="gene ID" value="ENSRNOG00000059276.2"/>
</dbReference>
<dbReference type="GeneID" id="498265"/>
<dbReference type="KEGG" id="rno:498265"/>
<dbReference type="UCSC" id="RGD:1563470">
    <property type="organism name" value="rat"/>
</dbReference>
<dbReference type="AGR" id="RGD:1563470"/>
<dbReference type="CTD" id="55732"/>
<dbReference type="RGD" id="1563470">
    <property type="gene designation" value="Firrm"/>
</dbReference>
<dbReference type="eggNOG" id="ENOG502QQPV">
    <property type="taxonomic scope" value="Eukaryota"/>
</dbReference>
<dbReference type="GeneTree" id="ENSGT00390000004791"/>
<dbReference type="HOGENOM" id="CLU_335441_0_0_1"/>
<dbReference type="InParanoid" id="Q5XI94"/>
<dbReference type="OrthoDB" id="44884at9989"/>
<dbReference type="PhylomeDB" id="Q5XI94"/>
<dbReference type="TreeFam" id="TF328571"/>
<dbReference type="Reactome" id="R-RNO-2500257">
    <property type="pathway name" value="Resolution of Sister Chromatid Cohesion"/>
</dbReference>
<dbReference type="Reactome" id="R-RNO-5693568">
    <property type="pathway name" value="Resolution of D-loop Structures through Holliday Junction Intermediates"/>
</dbReference>
<dbReference type="Reactome" id="R-RNO-912446">
    <property type="pathway name" value="Meiotic recombination"/>
</dbReference>
<dbReference type="PRO" id="PR:Q5XI94"/>
<dbReference type="Proteomes" id="UP000002494">
    <property type="component" value="Chromosome 13"/>
</dbReference>
<dbReference type="Bgee" id="ENSRNOG00000059276">
    <property type="expression patterns" value="Expressed in thymus and 19 other cell types or tissues"/>
</dbReference>
<dbReference type="ExpressionAtlas" id="Q5XI94">
    <property type="expression patterns" value="baseline and differential"/>
</dbReference>
<dbReference type="GO" id="GO:0000775">
    <property type="term" value="C:chromosome, centromeric region"/>
    <property type="evidence" value="ECO:0000250"/>
    <property type="project" value="UniProtKB"/>
</dbReference>
<dbReference type="GO" id="GO:0005737">
    <property type="term" value="C:cytoplasm"/>
    <property type="evidence" value="ECO:0007669"/>
    <property type="project" value="UniProtKB-KW"/>
</dbReference>
<dbReference type="GO" id="GO:0000776">
    <property type="term" value="C:kinetochore"/>
    <property type="evidence" value="ECO:0000250"/>
    <property type="project" value="UniProtKB"/>
</dbReference>
<dbReference type="GO" id="GO:0030496">
    <property type="term" value="C:midbody"/>
    <property type="evidence" value="ECO:0000250"/>
    <property type="project" value="UniProtKB"/>
</dbReference>
<dbReference type="GO" id="GO:0005634">
    <property type="term" value="C:nucleus"/>
    <property type="evidence" value="ECO:0000250"/>
    <property type="project" value="UniProtKB"/>
</dbReference>
<dbReference type="GO" id="GO:0051233">
    <property type="term" value="C:spindle midzone"/>
    <property type="evidence" value="ECO:0000250"/>
    <property type="project" value="UniProtKB"/>
</dbReference>
<dbReference type="GO" id="GO:0019901">
    <property type="term" value="F:protein kinase binding"/>
    <property type="evidence" value="ECO:0000250"/>
    <property type="project" value="UniProtKB"/>
</dbReference>
<dbReference type="GO" id="GO:0007059">
    <property type="term" value="P:chromosome segregation"/>
    <property type="evidence" value="ECO:0000266"/>
    <property type="project" value="RGD"/>
</dbReference>
<dbReference type="GO" id="GO:0036297">
    <property type="term" value="P:interstrand cross-link repair"/>
    <property type="evidence" value="ECO:0000250"/>
    <property type="project" value="UniProtKB"/>
</dbReference>
<dbReference type="GO" id="GO:0000278">
    <property type="term" value="P:mitotic cell cycle"/>
    <property type="evidence" value="ECO:0000250"/>
    <property type="project" value="UniProtKB"/>
</dbReference>
<dbReference type="InterPro" id="IPR027902">
    <property type="entry name" value="DUF4487"/>
</dbReference>
<dbReference type="PANTHER" id="PTHR16071">
    <property type="entry name" value="CHROMOSOME 1 OPEN READING FRAME 112"/>
    <property type="match status" value="1"/>
</dbReference>
<dbReference type="PANTHER" id="PTHR16071:SF2">
    <property type="entry name" value="FIGNL1-INTERACTING REGULATOR OF RECOMBINATION AND MITOSIS"/>
    <property type="match status" value="1"/>
</dbReference>
<dbReference type="Pfam" id="PF14868">
    <property type="entry name" value="DUF4487"/>
    <property type="match status" value="1"/>
</dbReference>
<keyword id="KW-0007">Acetylation</keyword>
<keyword id="KW-0137">Centromere</keyword>
<keyword id="KW-0158">Chromosome</keyword>
<keyword id="KW-0963">Cytoplasm</keyword>
<keyword id="KW-0206">Cytoskeleton</keyword>
<keyword id="KW-0995">Kinetochore</keyword>
<keyword id="KW-0539">Nucleus</keyword>
<keyword id="KW-0597">Phosphoprotein</keyword>
<keyword id="KW-1185">Reference proteome</keyword>
<comment type="function">
    <text evidence="1">Regulates PLK1 kinase activity at kinetochores and promotes faithful chromosome segregation in prometaphase by bridging kinase and phosphatase activities. Phosphorylation of FIRRM by PLK1 negatively regulates its interaction with the phosphatase, PPP1CC, thus creating a negative feedback loop for maintaining proper PLK1 kinase activity during mitosis. In complex with FIGL1 may regulate homologous recombination.</text>
</comment>
<comment type="subunit">
    <text evidence="1">Interacts (via its N-terminal region) with PLK1; controls PLK1 kinase activity. Interacts (via the KVVXF motif) with PPP1CC; controls PLK1 kinase activity. Interacts with FIGNL1; may regulate homologous recombination.</text>
</comment>
<comment type="subcellular location">
    <subcellularLocation>
        <location evidence="1">Chromosome</location>
        <location evidence="1">Centromere</location>
        <location evidence="1">Kinetochore</location>
    </subcellularLocation>
    <subcellularLocation>
        <location evidence="1">Nucleus</location>
    </subcellularLocation>
    <subcellularLocation>
        <location evidence="1">Chromosome</location>
        <location evidence="1">Centromere</location>
    </subcellularLocation>
    <subcellularLocation>
        <location evidence="1">Midbody</location>
    </subcellularLocation>
    <subcellularLocation>
        <location evidence="1">Cytoplasm</location>
        <location evidence="1">Cytoskeleton</location>
        <location evidence="1">Spindle</location>
    </subcellularLocation>
    <text evidence="1">Exhibits cell-cycle-dependent distribution during mitosis. Detected in the nucleus in interphase. Colocalizes with PLK1 to the centromeres in a nearby prometaphase cells. Relocates to the central spindle in anaphase and to the midbody in telophase cells.</text>
</comment>
<comment type="PTM">
    <text evidence="1">Phosphorylation at Ser-101 by PLK1 strengthens FIRRM-PLK1 interaction. Phosphorylation at Ser-796 by PLK1 negatively regulates its interaction with PPP1CC.</text>
</comment>
<proteinExistence type="evidence at transcript level"/>
<evidence type="ECO:0000250" key="1">
    <source>
        <dbReference type="UniProtKB" id="Q9NSG2"/>
    </source>
</evidence>
<organism>
    <name type="scientific">Rattus norvegicus</name>
    <name type="common">Rat</name>
    <dbReference type="NCBI Taxonomy" id="10116"/>
    <lineage>
        <taxon>Eukaryota</taxon>
        <taxon>Metazoa</taxon>
        <taxon>Chordata</taxon>
        <taxon>Craniata</taxon>
        <taxon>Vertebrata</taxon>
        <taxon>Euteleostomi</taxon>
        <taxon>Mammalia</taxon>
        <taxon>Eutheria</taxon>
        <taxon>Euarchontoglires</taxon>
        <taxon>Glires</taxon>
        <taxon>Rodentia</taxon>
        <taxon>Myomorpha</taxon>
        <taxon>Muroidea</taxon>
        <taxon>Muridae</taxon>
        <taxon>Murinae</taxon>
        <taxon>Rattus</taxon>
    </lineage>
</organism>
<gene>
    <name evidence="1" type="primary">Firrm</name>
</gene>